<organism>
    <name type="scientific">Photorhabdus temperata</name>
    <dbReference type="NCBI Taxonomy" id="574560"/>
    <lineage>
        <taxon>Bacteria</taxon>
        <taxon>Pseudomonadati</taxon>
        <taxon>Pseudomonadota</taxon>
        <taxon>Gammaproteobacteria</taxon>
        <taxon>Enterobacterales</taxon>
        <taxon>Morganellaceae</taxon>
        <taxon>Photorhabdus</taxon>
    </lineage>
</organism>
<gene>
    <name type="primary">lsrA</name>
</gene>
<evidence type="ECO:0000250" key="1">
    <source>
        <dbReference type="UniProtKB" id="P77257"/>
    </source>
</evidence>
<evidence type="ECO:0000255" key="2">
    <source>
        <dbReference type="PROSITE-ProRule" id="PRU00434"/>
    </source>
</evidence>
<evidence type="ECO:0000305" key="3"/>
<feature type="chain" id="PRO_0000351299" description="Autoinducer 2 import ATP-binding protein LsrA">
    <location>
        <begin position="1"/>
        <end position="520"/>
    </location>
</feature>
<feature type="domain" description="ABC transporter 1" evidence="2">
    <location>
        <begin position="12"/>
        <end position="240"/>
    </location>
</feature>
<feature type="domain" description="ABC transporter 2" evidence="2">
    <location>
        <begin position="264"/>
        <end position="503"/>
    </location>
</feature>
<feature type="binding site" evidence="2">
    <location>
        <begin position="44"/>
        <end position="51"/>
    </location>
    <ligand>
        <name>ATP</name>
        <dbReference type="ChEBI" id="CHEBI:30616"/>
    </ligand>
</feature>
<keyword id="KW-0067">ATP-binding</keyword>
<keyword id="KW-0997">Cell inner membrane</keyword>
<keyword id="KW-1003">Cell membrane</keyword>
<keyword id="KW-0472">Membrane</keyword>
<keyword id="KW-0547">Nucleotide-binding</keyword>
<keyword id="KW-0677">Repeat</keyword>
<keyword id="KW-1278">Translocase</keyword>
<keyword id="KW-0813">Transport</keyword>
<comment type="function">
    <text evidence="1">Part of the ABC transporter complex LsrABCD involved in autoinducer 2 (AI-2) import. Responsible for energy coupling to the transport system.</text>
</comment>
<comment type="catalytic activity">
    <reaction evidence="1">
        <text>ATP + H2O + (2R,4S)-2-methyl-2,3,3,4-tetrahydroxytetrahydrofuran-[AI-2-binding protein]Side 1 = ADP + phosphate + (2R,4S)-2-methyl-2,3,3,4-tetrahydroxytetrahydrofuranSide 2 + [AI-2-binding protein]Side 1.</text>
        <dbReference type="EC" id="7.6.2.13"/>
    </reaction>
</comment>
<comment type="subunit">
    <text evidence="1">The complex is composed of two ATP-binding proteins (LsrA), two transmembrane proteins (LsrC and LsrD) and a solute-binding protein (LsrB).</text>
</comment>
<comment type="subcellular location">
    <subcellularLocation>
        <location evidence="1">Cell inner membrane</location>
        <topology evidence="1">Peripheral membrane protein</topology>
    </subcellularLocation>
</comment>
<comment type="similarity">
    <text evidence="3">Belongs to the ABC transporter superfamily. AI-2 autoinducer porter (TC 3.A.1.2.8) family.</text>
</comment>
<protein>
    <recommendedName>
        <fullName evidence="1">Autoinducer 2 import ATP-binding protein LsrA</fullName>
        <shortName evidence="1">AI-2 import ATP-binding protein LsrA</shortName>
        <ecNumber evidence="1">7.6.2.13</ecNumber>
    </recommendedName>
</protein>
<reference key="1">
    <citation type="journal article" date="2006" name="J. Bacteriol.">
        <title>Whole-genome comparison between Photorhabdus strains to identify genomic regions involved in the specificity of nematode interaction.</title>
        <authorList>
            <person name="Gaudriault S."/>
            <person name="Duchaud E."/>
            <person name="Lanois A."/>
            <person name="Canoy A.-S."/>
            <person name="Bourot S."/>
            <person name="DeRose R."/>
            <person name="Kunst F."/>
            <person name="Boemare N."/>
            <person name="Givaudan A."/>
        </authorList>
    </citation>
    <scope>NUCLEOTIDE SEQUENCE [GENOMIC DNA]</scope>
    <source>
        <strain>C1 / NC19</strain>
    </source>
</reference>
<name>LSRA_PHOTE</name>
<proteinExistence type="inferred from homology"/>
<accession>Q2PBM3</accession>
<sequence length="520" mass="57213">MLHNNTAVPPLLEVSGISKQFSGVMVLKHIDFTLLPGQIHALLGGNGAGKSTLMKIIAGIEQPDKGSIKIDGNNVSHLNPTKAHQLGIYLIPQEPLLFPNLSVQENILFRLPKHQADKARMKHLLELLGCQLDLNANAGSLNVADQQLVEVMRGLIRNSNVLILDEPTASLTPAETERLFTQLRELQQQSVGIIFISHKIPEIHQLADQVSVMRDGGIALSGKTCDYTTDDIIRAITPAAKNKPLTDTEKRWSELNDNPQKTSSDLPVLTVTDLNGEGFRNITLSVKPGEILGLAGVVGAGRTELAETLYGLRPVLSGEIKLKQCPITRLKTVQRLKQGLVYLPEDRQSSGLFPDSSLSWNICSLTHNNRTFWVHPTYDATVVERYRQALNIKFSHINQPVKTLSGGNQQKILIAKCLEAHPAVLIIDEPTRGVDIAARNDIYQLIHNIAQQQVAIIFISSDLDEVVQMADRVLVMHQGEINGELTKQQIDVDTIMHIAFGEHKSQQAVSTIKTDKAASC</sequence>
<dbReference type="EC" id="7.6.2.13" evidence="1"/>
<dbReference type="EMBL" id="AJ967009">
    <property type="protein sequence ID" value="CAI91185.1"/>
    <property type="molecule type" value="Genomic_DNA"/>
</dbReference>
<dbReference type="SMR" id="Q2PBM3"/>
<dbReference type="GO" id="GO:0005886">
    <property type="term" value="C:plasma membrane"/>
    <property type="evidence" value="ECO:0007669"/>
    <property type="project" value="UniProtKB-SubCell"/>
</dbReference>
<dbReference type="GO" id="GO:0005524">
    <property type="term" value="F:ATP binding"/>
    <property type="evidence" value="ECO:0007669"/>
    <property type="project" value="UniProtKB-KW"/>
</dbReference>
<dbReference type="GO" id="GO:0016887">
    <property type="term" value="F:ATP hydrolysis activity"/>
    <property type="evidence" value="ECO:0007669"/>
    <property type="project" value="InterPro"/>
</dbReference>
<dbReference type="CDD" id="cd03216">
    <property type="entry name" value="ABC_Carb_Monos_I"/>
    <property type="match status" value="1"/>
</dbReference>
<dbReference type="CDD" id="cd03215">
    <property type="entry name" value="ABC_Carb_Monos_II"/>
    <property type="match status" value="1"/>
</dbReference>
<dbReference type="Gene3D" id="3.40.50.300">
    <property type="entry name" value="P-loop containing nucleotide triphosphate hydrolases"/>
    <property type="match status" value="2"/>
</dbReference>
<dbReference type="InterPro" id="IPR003593">
    <property type="entry name" value="AAA+_ATPase"/>
</dbReference>
<dbReference type="InterPro" id="IPR050107">
    <property type="entry name" value="ABC_carbohydrate_import_ATPase"/>
</dbReference>
<dbReference type="InterPro" id="IPR003439">
    <property type="entry name" value="ABC_transporter-like_ATP-bd"/>
</dbReference>
<dbReference type="InterPro" id="IPR017871">
    <property type="entry name" value="ABC_transporter-like_CS"/>
</dbReference>
<dbReference type="InterPro" id="IPR027417">
    <property type="entry name" value="P-loop_NTPase"/>
</dbReference>
<dbReference type="NCBIfam" id="NF011967">
    <property type="entry name" value="PRK15439.1"/>
    <property type="match status" value="1"/>
</dbReference>
<dbReference type="PANTHER" id="PTHR43790:SF2">
    <property type="entry name" value="AUTOINDUCER 2 IMPORT ATP-BINDING PROTEIN LSRA"/>
    <property type="match status" value="1"/>
</dbReference>
<dbReference type="PANTHER" id="PTHR43790">
    <property type="entry name" value="CARBOHYDRATE TRANSPORT ATP-BINDING PROTEIN MG119-RELATED"/>
    <property type="match status" value="1"/>
</dbReference>
<dbReference type="Pfam" id="PF00005">
    <property type="entry name" value="ABC_tran"/>
    <property type="match status" value="2"/>
</dbReference>
<dbReference type="SMART" id="SM00382">
    <property type="entry name" value="AAA"/>
    <property type="match status" value="2"/>
</dbReference>
<dbReference type="SUPFAM" id="SSF52540">
    <property type="entry name" value="P-loop containing nucleoside triphosphate hydrolases"/>
    <property type="match status" value="2"/>
</dbReference>
<dbReference type="PROSITE" id="PS00211">
    <property type="entry name" value="ABC_TRANSPORTER_1"/>
    <property type="match status" value="1"/>
</dbReference>
<dbReference type="PROSITE" id="PS50893">
    <property type="entry name" value="ABC_TRANSPORTER_2"/>
    <property type="match status" value="2"/>
</dbReference>